<comment type="function">
    <text evidence="2">Catalyzes the reversible phosphorolytic breakdown of the N-glycosidic bond in the beta-(deoxy)ribonucleoside molecules, with the formation of the corresponding free purine bases and pentose-1-phosphate.</text>
</comment>
<comment type="catalytic activity">
    <reaction evidence="2">
        <text>a purine D-ribonucleoside + phosphate = a purine nucleobase + alpha-D-ribose 1-phosphate</text>
        <dbReference type="Rhea" id="RHEA:19805"/>
        <dbReference type="ChEBI" id="CHEBI:26386"/>
        <dbReference type="ChEBI" id="CHEBI:43474"/>
        <dbReference type="ChEBI" id="CHEBI:57720"/>
        <dbReference type="ChEBI" id="CHEBI:142355"/>
        <dbReference type="EC" id="2.4.2.1"/>
    </reaction>
</comment>
<comment type="catalytic activity">
    <reaction evidence="2">
        <text>a purine 2'-deoxy-D-ribonucleoside + phosphate = a purine nucleobase + 2-deoxy-alpha-D-ribose 1-phosphate</text>
        <dbReference type="Rhea" id="RHEA:36431"/>
        <dbReference type="ChEBI" id="CHEBI:26386"/>
        <dbReference type="ChEBI" id="CHEBI:43474"/>
        <dbReference type="ChEBI" id="CHEBI:57259"/>
        <dbReference type="ChEBI" id="CHEBI:142361"/>
        <dbReference type="EC" id="2.4.2.1"/>
    </reaction>
</comment>
<comment type="subunit">
    <text evidence="2">Homohexamer; trimer of homodimers.</text>
</comment>
<comment type="similarity">
    <text evidence="2">Belongs to the PNP/UDP phosphorylase family.</text>
</comment>
<dbReference type="EC" id="2.4.2.1" evidence="2"/>
<dbReference type="EMBL" id="CP000264">
    <property type="protein sequence ID" value="ABD53716.1"/>
    <property type="molecule type" value="Genomic_DNA"/>
</dbReference>
<dbReference type="RefSeq" id="WP_011453924.1">
    <property type="nucleotide sequence ID" value="NC_007802.1"/>
</dbReference>
<dbReference type="SMR" id="Q28U96"/>
<dbReference type="STRING" id="290400.Jann_0799"/>
<dbReference type="KEGG" id="jan:Jann_0799"/>
<dbReference type="eggNOG" id="COG0813">
    <property type="taxonomic scope" value="Bacteria"/>
</dbReference>
<dbReference type="HOGENOM" id="CLU_068457_2_0_5"/>
<dbReference type="OrthoDB" id="9782889at2"/>
<dbReference type="Proteomes" id="UP000008326">
    <property type="component" value="Chromosome"/>
</dbReference>
<dbReference type="GO" id="GO:0005829">
    <property type="term" value="C:cytosol"/>
    <property type="evidence" value="ECO:0007669"/>
    <property type="project" value="TreeGrafter"/>
</dbReference>
<dbReference type="GO" id="GO:0004731">
    <property type="term" value="F:purine-nucleoside phosphorylase activity"/>
    <property type="evidence" value="ECO:0007669"/>
    <property type="project" value="UniProtKB-UniRule"/>
</dbReference>
<dbReference type="GO" id="GO:0006152">
    <property type="term" value="P:purine nucleoside catabolic process"/>
    <property type="evidence" value="ECO:0007669"/>
    <property type="project" value="TreeGrafter"/>
</dbReference>
<dbReference type="CDD" id="cd09006">
    <property type="entry name" value="PNP_EcPNPI-like"/>
    <property type="match status" value="1"/>
</dbReference>
<dbReference type="Gene3D" id="3.40.50.1580">
    <property type="entry name" value="Nucleoside phosphorylase domain"/>
    <property type="match status" value="1"/>
</dbReference>
<dbReference type="HAMAP" id="MF_01627">
    <property type="entry name" value="Pur_nucleosid_phosp"/>
    <property type="match status" value="1"/>
</dbReference>
<dbReference type="InterPro" id="IPR004402">
    <property type="entry name" value="DeoD-type"/>
</dbReference>
<dbReference type="InterPro" id="IPR018016">
    <property type="entry name" value="Nucleoside_phosphorylase_CS"/>
</dbReference>
<dbReference type="InterPro" id="IPR000845">
    <property type="entry name" value="Nucleoside_phosphorylase_d"/>
</dbReference>
<dbReference type="InterPro" id="IPR035994">
    <property type="entry name" value="Nucleoside_phosphorylase_sf"/>
</dbReference>
<dbReference type="NCBIfam" id="TIGR00107">
    <property type="entry name" value="deoD"/>
    <property type="match status" value="1"/>
</dbReference>
<dbReference type="NCBIfam" id="NF004489">
    <property type="entry name" value="PRK05819.1"/>
    <property type="match status" value="1"/>
</dbReference>
<dbReference type="PANTHER" id="PTHR43691:SF11">
    <property type="entry name" value="FI09636P-RELATED"/>
    <property type="match status" value="1"/>
</dbReference>
<dbReference type="PANTHER" id="PTHR43691">
    <property type="entry name" value="URIDINE PHOSPHORYLASE"/>
    <property type="match status" value="1"/>
</dbReference>
<dbReference type="Pfam" id="PF01048">
    <property type="entry name" value="PNP_UDP_1"/>
    <property type="match status" value="1"/>
</dbReference>
<dbReference type="SUPFAM" id="SSF53167">
    <property type="entry name" value="Purine and uridine phosphorylases"/>
    <property type="match status" value="1"/>
</dbReference>
<dbReference type="PROSITE" id="PS01232">
    <property type="entry name" value="PNP_UDP_1"/>
    <property type="match status" value="1"/>
</dbReference>
<keyword id="KW-0328">Glycosyltransferase</keyword>
<keyword id="KW-1185">Reference proteome</keyword>
<keyword id="KW-0808">Transferase</keyword>
<accession>Q28U96</accession>
<protein>
    <recommendedName>
        <fullName evidence="2">Purine nucleoside phosphorylase DeoD-type</fullName>
        <shortName evidence="2">PNP</shortName>
        <ecNumber evidence="2">2.4.2.1</ecNumber>
    </recommendedName>
</protein>
<gene>
    <name evidence="2" type="primary">deoD</name>
    <name type="ordered locus">Jann_0799</name>
</gene>
<reference key="1">
    <citation type="submission" date="2006-02" db="EMBL/GenBank/DDBJ databases">
        <title>Complete sequence of chromosome of Jannaschia sp. CCS1.</title>
        <authorList>
            <consortium name="US DOE Joint Genome Institute"/>
            <person name="Copeland A."/>
            <person name="Lucas S."/>
            <person name="Lapidus A."/>
            <person name="Barry K."/>
            <person name="Detter J.C."/>
            <person name="Glavina del Rio T."/>
            <person name="Hammon N."/>
            <person name="Israni S."/>
            <person name="Pitluck S."/>
            <person name="Brettin T."/>
            <person name="Bruce D."/>
            <person name="Han C."/>
            <person name="Tapia R."/>
            <person name="Gilna P."/>
            <person name="Chertkov O."/>
            <person name="Saunders E."/>
            <person name="Schmutz J."/>
            <person name="Larimer F."/>
            <person name="Land M."/>
            <person name="Kyrpides N."/>
            <person name="Lykidis A."/>
            <person name="Moran M.A."/>
            <person name="Belas R."/>
            <person name="Ye W."/>
            <person name="Buchan A."/>
            <person name="Gonzalez J.M."/>
            <person name="Schell M.A."/>
            <person name="Richardson P."/>
        </authorList>
    </citation>
    <scope>NUCLEOTIDE SEQUENCE [LARGE SCALE GENOMIC DNA]</scope>
    <source>
        <strain>CCS1</strain>
    </source>
</reference>
<feature type="chain" id="PRO_1000186203" description="Purine nucleoside phosphorylase DeoD-type">
    <location>
        <begin position="1"/>
        <end position="234"/>
    </location>
</feature>
<feature type="active site" description="Proton donor" evidence="2">
    <location>
        <position position="204"/>
    </location>
</feature>
<feature type="binding site" evidence="1">
    <location>
        <position position="4"/>
    </location>
    <ligand>
        <name>a purine D-ribonucleoside</name>
        <dbReference type="ChEBI" id="CHEBI:142355"/>
        <note>ligand shared between dimeric partners</note>
    </ligand>
</feature>
<feature type="binding site" description="in other chain" evidence="1">
    <location>
        <position position="20"/>
    </location>
    <ligand>
        <name>phosphate</name>
        <dbReference type="ChEBI" id="CHEBI:43474"/>
        <note>ligand shared between dimeric partners</note>
    </ligand>
</feature>
<feature type="binding site" description="in other chain" evidence="1">
    <location>
        <position position="24"/>
    </location>
    <ligand>
        <name>phosphate</name>
        <dbReference type="ChEBI" id="CHEBI:43474"/>
        <note>ligand shared between dimeric partners</note>
    </ligand>
</feature>
<feature type="binding site" evidence="1">
    <location>
        <position position="43"/>
    </location>
    <ligand>
        <name>phosphate</name>
        <dbReference type="ChEBI" id="CHEBI:43474"/>
        <note>ligand shared between dimeric partners</note>
    </ligand>
</feature>
<feature type="binding site" description="in other chain" evidence="1">
    <location>
        <begin position="87"/>
        <end position="90"/>
    </location>
    <ligand>
        <name>phosphate</name>
        <dbReference type="ChEBI" id="CHEBI:43474"/>
        <note>ligand shared between dimeric partners</note>
    </ligand>
</feature>
<feature type="binding site" description="in other chain" evidence="1">
    <location>
        <position position="162"/>
    </location>
    <ligand>
        <name>a purine D-ribonucleoside</name>
        <dbReference type="ChEBI" id="CHEBI:142355"/>
        <note>ligand shared between dimeric partners</note>
    </ligand>
</feature>
<feature type="binding site" description="in other chain" evidence="1">
    <location>
        <begin position="179"/>
        <end position="181"/>
    </location>
    <ligand>
        <name>a purine D-ribonucleoside</name>
        <dbReference type="ChEBI" id="CHEBI:142355"/>
        <note>ligand shared between dimeric partners</note>
    </ligand>
</feature>
<feature type="binding site" description="in other chain" evidence="1">
    <location>
        <begin position="203"/>
        <end position="204"/>
    </location>
    <ligand>
        <name>a purine D-ribonucleoside</name>
        <dbReference type="ChEBI" id="CHEBI:142355"/>
        <note>ligand shared between dimeric partners</note>
    </ligand>
</feature>
<feature type="site" description="Important for catalytic activity" evidence="2">
    <location>
        <position position="217"/>
    </location>
</feature>
<proteinExistence type="inferred from homology"/>
<sequence length="234" mass="25281">MTVHIGAAPGDIAETVLMPGDPLRAKWAAERFLENPVCVNEVRGMLGFTGMWRGNRVTIHGSGMGMPSLSIYANELLRDYGAKTLIRIGSCGAMQADVKLRDVILAMTASTLSTPSSGIFRELNYAPCADYGLLQAAYKAAEGKGSPIHVGGIYSSDVFYDERPDLNEQMVRHGVLAVEMEAAELYTLAARHKARALAVLTVSDHLLTEEALPSEERQSSFSDMVEIALEAAFS</sequence>
<evidence type="ECO:0000250" key="1">
    <source>
        <dbReference type="UniProtKB" id="P50389"/>
    </source>
</evidence>
<evidence type="ECO:0000255" key="2">
    <source>
        <dbReference type="HAMAP-Rule" id="MF_01627"/>
    </source>
</evidence>
<organism>
    <name type="scientific">Jannaschia sp. (strain CCS1)</name>
    <dbReference type="NCBI Taxonomy" id="290400"/>
    <lineage>
        <taxon>Bacteria</taxon>
        <taxon>Pseudomonadati</taxon>
        <taxon>Pseudomonadota</taxon>
        <taxon>Alphaproteobacteria</taxon>
        <taxon>Rhodobacterales</taxon>
        <taxon>Roseobacteraceae</taxon>
        <taxon>Jannaschia</taxon>
    </lineage>
</organism>
<name>DEOD_JANSC</name>